<feature type="chain" id="PRO_1000205688" description="tRNA modification GTPase MnmE">
    <location>
        <begin position="1"/>
        <end position="454"/>
    </location>
</feature>
<feature type="domain" description="TrmE-type G">
    <location>
        <begin position="216"/>
        <end position="377"/>
    </location>
</feature>
<feature type="binding site" evidence="1">
    <location>
        <position position="23"/>
    </location>
    <ligand>
        <name>(6S)-5-formyl-5,6,7,8-tetrahydrofolate</name>
        <dbReference type="ChEBI" id="CHEBI:57457"/>
    </ligand>
</feature>
<feature type="binding site" evidence="1">
    <location>
        <position position="80"/>
    </location>
    <ligand>
        <name>(6S)-5-formyl-5,6,7,8-tetrahydrofolate</name>
        <dbReference type="ChEBI" id="CHEBI:57457"/>
    </ligand>
</feature>
<feature type="binding site" evidence="1">
    <location>
        <position position="120"/>
    </location>
    <ligand>
        <name>(6S)-5-formyl-5,6,7,8-tetrahydrofolate</name>
        <dbReference type="ChEBI" id="CHEBI:57457"/>
    </ligand>
</feature>
<feature type="binding site" evidence="1">
    <location>
        <begin position="226"/>
        <end position="231"/>
    </location>
    <ligand>
        <name>GTP</name>
        <dbReference type="ChEBI" id="CHEBI:37565"/>
    </ligand>
</feature>
<feature type="binding site" evidence="1">
    <location>
        <position position="226"/>
    </location>
    <ligand>
        <name>K(+)</name>
        <dbReference type="ChEBI" id="CHEBI:29103"/>
    </ligand>
</feature>
<feature type="binding site" evidence="1">
    <location>
        <position position="230"/>
    </location>
    <ligand>
        <name>Mg(2+)</name>
        <dbReference type="ChEBI" id="CHEBI:18420"/>
    </ligand>
</feature>
<feature type="binding site" evidence="1">
    <location>
        <begin position="245"/>
        <end position="251"/>
    </location>
    <ligand>
        <name>GTP</name>
        <dbReference type="ChEBI" id="CHEBI:37565"/>
    </ligand>
</feature>
<feature type="binding site" evidence="1">
    <location>
        <position position="245"/>
    </location>
    <ligand>
        <name>K(+)</name>
        <dbReference type="ChEBI" id="CHEBI:29103"/>
    </ligand>
</feature>
<feature type="binding site" evidence="1">
    <location>
        <position position="247"/>
    </location>
    <ligand>
        <name>K(+)</name>
        <dbReference type="ChEBI" id="CHEBI:29103"/>
    </ligand>
</feature>
<feature type="binding site" evidence="1">
    <location>
        <position position="250"/>
    </location>
    <ligand>
        <name>K(+)</name>
        <dbReference type="ChEBI" id="CHEBI:29103"/>
    </ligand>
</feature>
<feature type="binding site" evidence="1">
    <location>
        <position position="251"/>
    </location>
    <ligand>
        <name>Mg(2+)</name>
        <dbReference type="ChEBI" id="CHEBI:18420"/>
    </ligand>
</feature>
<feature type="binding site" evidence="1">
    <location>
        <begin position="270"/>
        <end position="273"/>
    </location>
    <ligand>
        <name>GTP</name>
        <dbReference type="ChEBI" id="CHEBI:37565"/>
    </ligand>
</feature>
<feature type="binding site" evidence="1">
    <location>
        <begin position="335"/>
        <end position="338"/>
    </location>
    <ligand>
        <name>GTP</name>
        <dbReference type="ChEBI" id="CHEBI:37565"/>
    </ligand>
</feature>
<feature type="binding site" evidence="1">
    <location>
        <begin position="358"/>
        <end position="360"/>
    </location>
    <ligand>
        <name>GTP</name>
        <dbReference type="ChEBI" id="CHEBI:37565"/>
    </ligand>
</feature>
<feature type="binding site" evidence="1">
    <location>
        <position position="454"/>
    </location>
    <ligand>
        <name>(6S)-5-formyl-5,6,7,8-tetrahydrofolate</name>
        <dbReference type="ChEBI" id="CHEBI:57457"/>
    </ligand>
</feature>
<keyword id="KW-0963">Cytoplasm</keyword>
<keyword id="KW-0342">GTP-binding</keyword>
<keyword id="KW-0378">Hydrolase</keyword>
<keyword id="KW-0460">Magnesium</keyword>
<keyword id="KW-0479">Metal-binding</keyword>
<keyword id="KW-0547">Nucleotide-binding</keyword>
<keyword id="KW-0630">Potassium</keyword>
<keyword id="KW-0819">tRNA processing</keyword>
<name>MNME_PECCP</name>
<organism>
    <name type="scientific">Pectobacterium carotovorum subsp. carotovorum (strain PC1)</name>
    <dbReference type="NCBI Taxonomy" id="561230"/>
    <lineage>
        <taxon>Bacteria</taxon>
        <taxon>Pseudomonadati</taxon>
        <taxon>Pseudomonadota</taxon>
        <taxon>Gammaproteobacteria</taxon>
        <taxon>Enterobacterales</taxon>
        <taxon>Pectobacteriaceae</taxon>
        <taxon>Pectobacterium</taxon>
    </lineage>
</organism>
<proteinExistence type="inferred from homology"/>
<comment type="function">
    <text evidence="1">Exhibits a very high intrinsic GTPase hydrolysis rate. Involved in the addition of a carboxymethylaminomethyl (cmnm) group at the wobble position (U34) of certain tRNAs, forming tRNA-cmnm(5)s(2)U34.</text>
</comment>
<comment type="cofactor">
    <cofactor evidence="1">
        <name>K(+)</name>
        <dbReference type="ChEBI" id="CHEBI:29103"/>
    </cofactor>
    <text evidence="1">Binds 1 potassium ion per subunit.</text>
</comment>
<comment type="subunit">
    <text evidence="1">Homodimer. Heterotetramer of two MnmE and two MnmG subunits.</text>
</comment>
<comment type="subcellular location">
    <subcellularLocation>
        <location evidence="1">Cytoplasm</location>
    </subcellularLocation>
</comment>
<comment type="similarity">
    <text evidence="1">Belongs to the TRAFAC class TrmE-Era-EngA-EngB-Septin-like GTPase superfamily. TrmE GTPase family.</text>
</comment>
<evidence type="ECO:0000255" key="1">
    <source>
        <dbReference type="HAMAP-Rule" id="MF_00379"/>
    </source>
</evidence>
<gene>
    <name evidence="1" type="primary">mnmE</name>
    <name evidence="1" type="synonym">trmE</name>
    <name type="ordered locus">PC1_4292</name>
</gene>
<sequence>MSNTDTIVAQATPPGRGGVGILRVSGRAAAEVAQAVLGKLPKPRHADYLPFRDANGTTLDQGIALWFPGPNSFTGEDVLELQGHGGPVILDLLLKRILTLPNVRIARPGEFSERAFLNDKLDLAQAEAIADLIDASSEQAARSALNSLQGVFSTRVNQLVEALTHLRIYVEAAIDFPDEEIDFLSDGKIESQLNGVMADLDAVRAEAHQGSLLREGMKVVIAGRPNAGKSSLLNALAGREAAIVTDIAGTTRDVLREHIHIDGMPLHIIDTAGLRDASDEVERIGIERAWQEIEQADRVLFMVDGTTTQATEPEQIWPEFMARLPKTLPITVVRNKADVTGETLGIEDVNTHSLIRLSARTGDGVDTLRDHLKQSMGFTSNTEGGFLARRRHLQALELAAQHLIQGKEQLVSAYAGELLAEELRLAQQSLSEITGEFTSDDLLGRIFSSFCIGK</sequence>
<reference key="1">
    <citation type="submission" date="2009-07" db="EMBL/GenBank/DDBJ databases">
        <title>Complete sequence of Pectobacterium carotovorum subsp. carotovorum PC1.</title>
        <authorList>
            <consortium name="US DOE Joint Genome Institute"/>
            <person name="Lucas S."/>
            <person name="Copeland A."/>
            <person name="Lapidus A."/>
            <person name="Glavina del Rio T."/>
            <person name="Tice H."/>
            <person name="Bruce D."/>
            <person name="Goodwin L."/>
            <person name="Pitluck S."/>
            <person name="Munk A.C."/>
            <person name="Brettin T."/>
            <person name="Detter J.C."/>
            <person name="Han C."/>
            <person name="Tapia R."/>
            <person name="Larimer F."/>
            <person name="Land M."/>
            <person name="Hauser L."/>
            <person name="Kyrpides N."/>
            <person name="Mikhailova N."/>
            <person name="Balakrishnan V."/>
            <person name="Glasner J."/>
            <person name="Perna N.T."/>
        </authorList>
    </citation>
    <scope>NUCLEOTIDE SEQUENCE [LARGE SCALE GENOMIC DNA]</scope>
    <source>
        <strain>PC1</strain>
    </source>
</reference>
<protein>
    <recommendedName>
        <fullName evidence="1">tRNA modification GTPase MnmE</fullName>
        <ecNumber evidence="1">3.6.-.-</ecNumber>
    </recommendedName>
</protein>
<accession>C6DK97</accession>
<dbReference type="EC" id="3.6.-.-" evidence="1"/>
<dbReference type="EMBL" id="CP001657">
    <property type="protein sequence ID" value="ACT15306.1"/>
    <property type="molecule type" value="Genomic_DNA"/>
</dbReference>
<dbReference type="RefSeq" id="WP_015842365.1">
    <property type="nucleotide sequence ID" value="NC_012917.1"/>
</dbReference>
<dbReference type="SMR" id="C6DK97"/>
<dbReference type="STRING" id="561230.PC1_4292"/>
<dbReference type="KEGG" id="pct:PC1_4292"/>
<dbReference type="eggNOG" id="COG0486">
    <property type="taxonomic scope" value="Bacteria"/>
</dbReference>
<dbReference type="HOGENOM" id="CLU_019624_4_1_6"/>
<dbReference type="OrthoDB" id="9805918at2"/>
<dbReference type="Proteomes" id="UP000002736">
    <property type="component" value="Chromosome"/>
</dbReference>
<dbReference type="GO" id="GO:0005829">
    <property type="term" value="C:cytosol"/>
    <property type="evidence" value="ECO:0007669"/>
    <property type="project" value="TreeGrafter"/>
</dbReference>
<dbReference type="GO" id="GO:0005525">
    <property type="term" value="F:GTP binding"/>
    <property type="evidence" value="ECO:0007669"/>
    <property type="project" value="UniProtKB-UniRule"/>
</dbReference>
<dbReference type="GO" id="GO:0003924">
    <property type="term" value="F:GTPase activity"/>
    <property type="evidence" value="ECO:0007669"/>
    <property type="project" value="UniProtKB-UniRule"/>
</dbReference>
<dbReference type="GO" id="GO:0046872">
    <property type="term" value="F:metal ion binding"/>
    <property type="evidence" value="ECO:0007669"/>
    <property type="project" value="UniProtKB-KW"/>
</dbReference>
<dbReference type="GO" id="GO:0030488">
    <property type="term" value="P:tRNA methylation"/>
    <property type="evidence" value="ECO:0007669"/>
    <property type="project" value="TreeGrafter"/>
</dbReference>
<dbReference type="GO" id="GO:0002098">
    <property type="term" value="P:tRNA wobble uridine modification"/>
    <property type="evidence" value="ECO:0007669"/>
    <property type="project" value="TreeGrafter"/>
</dbReference>
<dbReference type="CDD" id="cd04164">
    <property type="entry name" value="trmE"/>
    <property type="match status" value="1"/>
</dbReference>
<dbReference type="CDD" id="cd14858">
    <property type="entry name" value="TrmE_N"/>
    <property type="match status" value="1"/>
</dbReference>
<dbReference type="FunFam" id="3.30.1360.120:FF:000001">
    <property type="entry name" value="tRNA modification GTPase MnmE"/>
    <property type="match status" value="1"/>
</dbReference>
<dbReference type="FunFam" id="3.40.50.300:FF:000249">
    <property type="entry name" value="tRNA modification GTPase MnmE"/>
    <property type="match status" value="1"/>
</dbReference>
<dbReference type="Gene3D" id="3.40.50.300">
    <property type="entry name" value="P-loop containing nucleotide triphosphate hydrolases"/>
    <property type="match status" value="1"/>
</dbReference>
<dbReference type="Gene3D" id="3.30.1360.120">
    <property type="entry name" value="Probable tRNA modification gtpase trme, domain 1"/>
    <property type="match status" value="1"/>
</dbReference>
<dbReference type="Gene3D" id="1.20.120.430">
    <property type="entry name" value="tRNA modification GTPase MnmE domain 2"/>
    <property type="match status" value="1"/>
</dbReference>
<dbReference type="HAMAP" id="MF_00379">
    <property type="entry name" value="GTPase_MnmE"/>
    <property type="match status" value="1"/>
</dbReference>
<dbReference type="InterPro" id="IPR031168">
    <property type="entry name" value="G_TrmE"/>
</dbReference>
<dbReference type="InterPro" id="IPR006073">
    <property type="entry name" value="GTP-bd"/>
</dbReference>
<dbReference type="InterPro" id="IPR018948">
    <property type="entry name" value="GTP-bd_TrmE_N"/>
</dbReference>
<dbReference type="InterPro" id="IPR004520">
    <property type="entry name" value="GTPase_MnmE"/>
</dbReference>
<dbReference type="InterPro" id="IPR027368">
    <property type="entry name" value="MnmE_dom2"/>
</dbReference>
<dbReference type="InterPro" id="IPR025867">
    <property type="entry name" value="MnmE_helical"/>
</dbReference>
<dbReference type="InterPro" id="IPR027417">
    <property type="entry name" value="P-loop_NTPase"/>
</dbReference>
<dbReference type="InterPro" id="IPR005225">
    <property type="entry name" value="Small_GTP-bd"/>
</dbReference>
<dbReference type="InterPro" id="IPR027266">
    <property type="entry name" value="TrmE/GcvT_dom1"/>
</dbReference>
<dbReference type="NCBIfam" id="TIGR00450">
    <property type="entry name" value="mnmE_trmE_thdF"/>
    <property type="match status" value="1"/>
</dbReference>
<dbReference type="NCBIfam" id="NF003661">
    <property type="entry name" value="PRK05291.1-3"/>
    <property type="match status" value="1"/>
</dbReference>
<dbReference type="NCBIfam" id="TIGR00231">
    <property type="entry name" value="small_GTP"/>
    <property type="match status" value="1"/>
</dbReference>
<dbReference type="PANTHER" id="PTHR42714">
    <property type="entry name" value="TRNA MODIFICATION GTPASE GTPBP3"/>
    <property type="match status" value="1"/>
</dbReference>
<dbReference type="PANTHER" id="PTHR42714:SF2">
    <property type="entry name" value="TRNA MODIFICATION GTPASE GTPBP3, MITOCHONDRIAL"/>
    <property type="match status" value="1"/>
</dbReference>
<dbReference type="Pfam" id="PF01926">
    <property type="entry name" value="MMR_HSR1"/>
    <property type="match status" value="1"/>
</dbReference>
<dbReference type="Pfam" id="PF12631">
    <property type="entry name" value="MnmE_helical"/>
    <property type="match status" value="1"/>
</dbReference>
<dbReference type="Pfam" id="PF10396">
    <property type="entry name" value="TrmE_N"/>
    <property type="match status" value="1"/>
</dbReference>
<dbReference type="SUPFAM" id="SSF52540">
    <property type="entry name" value="P-loop containing nucleoside triphosphate hydrolases"/>
    <property type="match status" value="1"/>
</dbReference>
<dbReference type="SUPFAM" id="SSF116878">
    <property type="entry name" value="TrmE connector domain"/>
    <property type="match status" value="1"/>
</dbReference>
<dbReference type="PROSITE" id="PS51709">
    <property type="entry name" value="G_TRME"/>
    <property type="match status" value="1"/>
</dbReference>